<reference key="1">
    <citation type="journal article" date="1991" name="Biochim. Biophys. Acta">
        <title>Nucleotide sequence of the lipase gene lip3 from the antarctic psychotroph Moraxella TA144.</title>
        <authorList>
            <person name="Feller G."/>
            <person name="Thiry M."/>
            <person name="Gerday C."/>
        </authorList>
    </citation>
    <scope>NUCLEOTIDE SEQUENCE [GENOMIC DNA]</scope>
</reference>
<evidence type="ECO:0000250" key="1"/>
<evidence type="ECO:0000255" key="2"/>
<evidence type="ECO:0000255" key="3">
    <source>
        <dbReference type="PROSITE-ProRule" id="PRU00303"/>
    </source>
</evidence>
<evidence type="ECO:0000305" key="4"/>
<accession>P24640</accession>
<keyword id="KW-1003">Cell membrane</keyword>
<keyword id="KW-0378">Hydrolase</keyword>
<keyword id="KW-0442">Lipid degradation</keyword>
<keyword id="KW-0443">Lipid metabolism</keyword>
<keyword id="KW-0449">Lipoprotein</keyword>
<keyword id="KW-0472">Membrane</keyword>
<keyword id="KW-0564">Palmitate</keyword>
<keyword id="KW-0732">Signal</keyword>
<gene>
    <name type="primary">lip3</name>
    <name type="synonym">L3</name>
</gene>
<organism>
    <name type="scientific">Moraxella sp. (strain TA144)</name>
    <dbReference type="NCBI Taxonomy" id="77152"/>
    <lineage>
        <taxon>Bacteria</taxon>
        <taxon>Pseudomonadati</taxon>
        <taxon>Pseudomonadota</taxon>
        <taxon>Gammaproteobacteria</taxon>
        <taxon>Moraxellales</taxon>
        <taxon>Moraxellaceae</taxon>
        <taxon>Moraxella</taxon>
    </lineage>
</organism>
<sequence>MLLKRLGLAALFSLSMVGCTTAPNTLAVNTTQKIIQYERSKSDLEVKSLTLASGDKMVYAENDNVTGEPLLLIHGFGGNKDNFTRIADKLEGYHLIIPDLLGFGNSSKPMTADYRADAQATRLHELMQAKGLASNTHVGGNSMGGAISVAYAAKYPKEIKSLWLVDTAGFWSAGVPKSLEGATLENNPLLINSKEDFYKMYDFVMYKPPYIPKSVKAVFAQERINNKALDTKILEQIVTDNVEERAKIIAKYNIPTLVVWGDKDQVIKPETTELIKEIIPQAQVIMMNDVGHVPMVEAVKDTANDYKAFRDGLKK</sequence>
<feature type="signal peptide" evidence="3">
    <location>
        <begin position="1"/>
        <end position="18"/>
    </location>
</feature>
<feature type="chain" id="PRO_0000008547" description="Lipase 3">
    <location>
        <begin position="19"/>
        <end position="315"/>
    </location>
</feature>
<feature type="domain" description="AB hydrolase-1" evidence="2">
    <location>
        <begin position="69"/>
        <end position="296"/>
    </location>
</feature>
<feature type="active site" evidence="2">
    <location>
        <position position="74"/>
    </location>
</feature>
<feature type="active site" description="Charge relay system" evidence="1">
    <location>
        <position position="142"/>
    </location>
</feature>
<feature type="lipid moiety-binding region" description="N-palmitoyl cysteine" evidence="3">
    <location>
        <position position="19"/>
    </location>
</feature>
<feature type="lipid moiety-binding region" description="S-diacylglycerol cysteine" evidence="3">
    <location>
        <position position="19"/>
    </location>
</feature>
<protein>
    <recommendedName>
        <fullName>Lipase 3</fullName>
        <ecNumber>3.1.1.3</ecNumber>
    </recommendedName>
    <alternativeName>
        <fullName>Triacylglycerol lipase</fullName>
    </alternativeName>
</protein>
<name>LIP3_MORS1</name>
<dbReference type="EC" id="3.1.1.3"/>
<dbReference type="EMBL" id="X53869">
    <property type="protein sequence ID" value="CAA37863.1"/>
    <property type="molecule type" value="Genomic_DNA"/>
</dbReference>
<dbReference type="PIR" id="S14276">
    <property type="entry name" value="S14276"/>
</dbReference>
<dbReference type="SMR" id="P24640"/>
<dbReference type="ESTHER" id="morsp-3lipa">
    <property type="family name" value="ABHD6-Lip"/>
</dbReference>
<dbReference type="GO" id="GO:0005886">
    <property type="term" value="C:plasma membrane"/>
    <property type="evidence" value="ECO:0007669"/>
    <property type="project" value="UniProtKB-SubCell"/>
</dbReference>
<dbReference type="GO" id="GO:0047372">
    <property type="term" value="F:monoacylglycerol lipase activity"/>
    <property type="evidence" value="ECO:0007669"/>
    <property type="project" value="TreeGrafter"/>
</dbReference>
<dbReference type="GO" id="GO:0004806">
    <property type="term" value="F:triacylglycerol lipase activity"/>
    <property type="evidence" value="ECO:0007669"/>
    <property type="project" value="UniProtKB-EC"/>
</dbReference>
<dbReference type="GO" id="GO:0046464">
    <property type="term" value="P:acylglycerol catabolic process"/>
    <property type="evidence" value="ECO:0007669"/>
    <property type="project" value="TreeGrafter"/>
</dbReference>
<dbReference type="Gene3D" id="3.40.50.1820">
    <property type="entry name" value="alpha/beta hydrolase"/>
    <property type="match status" value="1"/>
</dbReference>
<dbReference type="InterPro" id="IPR000073">
    <property type="entry name" value="AB_hydrolase_1"/>
</dbReference>
<dbReference type="InterPro" id="IPR029058">
    <property type="entry name" value="AB_hydrolase_fold"/>
</dbReference>
<dbReference type="InterPro" id="IPR050266">
    <property type="entry name" value="AB_hydrolase_sf"/>
</dbReference>
<dbReference type="InterPro" id="IPR000639">
    <property type="entry name" value="Epox_hydrolase-like"/>
</dbReference>
<dbReference type="PANTHER" id="PTHR43798">
    <property type="entry name" value="MONOACYLGLYCEROL LIPASE"/>
    <property type="match status" value="1"/>
</dbReference>
<dbReference type="PANTHER" id="PTHR43798:SF5">
    <property type="entry name" value="MONOACYLGLYCEROL LIPASE ABHD6"/>
    <property type="match status" value="1"/>
</dbReference>
<dbReference type="Pfam" id="PF00561">
    <property type="entry name" value="Abhydrolase_1"/>
    <property type="match status" value="1"/>
</dbReference>
<dbReference type="PRINTS" id="PR00111">
    <property type="entry name" value="ABHYDROLASE"/>
</dbReference>
<dbReference type="PRINTS" id="PR00412">
    <property type="entry name" value="EPOXHYDRLASE"/>
</dbReference>
<dbReference type="SUPFAM" id="SSF53474">
    <property type="entry name" value="alpha/beta-Hydrolases"/>
    <property type="match status" value="1"/>
</dbReference>
<dbReference type="PROSITE" id="PS51257">
    <property type="entry name" value="PROKAR_LIPOPROTEIN"/>
    <property type="match status" value="1"/>
</dbReference>
<proteinExistence type="evidence at protein level"/>
<comment type="catalytic activity">
    <reaction>
        <text>a triacylglycerol + H2O = a diacylglycerol + a fatty acid + H(+)</text>
        <dbReference type="Rhea" id="RHEA:12044"/>
        <dbReference type="ChEBI" id="CHEBI:15377"/>
        <dbReference type="ChEBI" id="CHEBI:15378"/>
        <dbReference type="ChEBI" id="CHEBI:17855"/>
        <dbReference type="ChEBI" id="CHEBI:18035"/>
        <dbReference type="ChEBI" id="CHEBI:28868"/>
        <dbReference type="EC" id="3.1.1.3"/>
    </reaction>
</comment>
<comment type="biophysicochemical properties">
    <temperatureDependence>
        <text>Active at temperatures close to 0 degree Celsius.</text>
    </temperatureDependence>
</comment>
<comment type="subcellular location">
    <subcellularLocation>
        <location evidence="3">Cell membrane</location>
        <topology evidence="3">Lipid-anchor</topology>
    </subcellularLocation>
</comment>
<comment type="similarity">
    <text evidence="4">Belongs to the lipase/esterase LIP3/BchO family.</text>
</comment>